<accession>Q8FNR2</accession>
<gene>
    <name type="primary">qcrB</name>
    <name type="ordered locus">CE2082</name>
</gene>
<keyword id="KW-1003">Cell membrane</keyword>
<keyword id="KW-0249">Electron transport</keyword>
<keyword id="KW-0349">Heme</keyword>
<keyword id="KW-0408">Iron</keyword>
<keyword id="KW-0472">Membrane</keyword>
<keyword id="KW-0479">Metal-binding</keyword>
<keyword id="KW-1185">Reference proteome</keyword>
<keyword id="KW-0679">Respiratory chain</keyword>
<keyword id="KW-1278">Translocase</keyword>
<keyword id="KW-0812">Transmembrane</keyword>
<keyword id="KW-1133">Transmembrane helix</keyword>
<keyword id="KW-0813">Transport</keyword>
<comment type="function">
    <text evidence="2">Cytochrome b subunit of the cytochrome bc1 complex, an essential component of the respiratory electron transport chain required for ATP synthesis. The bc1 complex catalyzes the oxidation of menaquinol and the reduction of cytochrome c in the respiratory chain. The bc1 complex operates through a Q-cycle mechanism that couples electron transfer to generation of the proton gradient that drives ATP synthesis.</text>
</comment>
<comment type="catalytic activity">
    <reaction evidence="2">
        <text>a quinol + 2 Fe(III)-[cytochrome c](out) = a quinone + 2 Fe(II)-[cytochrome c](out) + 2 H(+)(out)</text>
        <dbReference type="Rhea" id="RHEA:11484"/>
        <dbReference type="Rhea" id="RHEA-COMP:10350"/>
        <dbReference type="Rhea" id="RHEA-COMP:14399"/>
        <dbReference type="ChEBI" id="CHEBI:15378"/>
        <dbReference type="ChEBI" id="CHEBI:24646"/>
        <dbReference type="ChEBI" id="CHEBI:29033"/>
        <dbReference type="ChEBI" id="CHEBI:29034"/>
        <dbReference type="ChEBI" id="CHEBI:132124"/>
        <dbReference type="EC" id="7.1.1.8"/>
    </reaction>
</comment>
<comment type="cofactor">
    <cofactor evidence="1">
        <name>heme</name>
        <dbReference type="ChEBI" id="CHEBI:30413"/>
    </cofactor>
    <text evidence="1">Binds 2 heme groups non-covalently per subunit.</text>
</comment>
<comment type="subunit">
    <text evidence="2">The cytochrome bc1 complex is composed of a cytochrome b (QcrB), the Rieske protein iron-sulfur (QcrA) and a diheme cytochrome c (QcrC) subunit.</text>
</comment>
<comment type="subcellular location">
    <subcellularLocation>
        <location evidence="3">Cell membrane</location>
        <topology evidence="3">Multi-pass membrane protein</topology>
    </subcellularLocation>
</comment>
<comment type="similarity">
    <text evidence="4">Belongs to the cytochrome b family.</text>
</comment>
<dbReference type="EC" id="7.1.1.8" evidence="2"/>
<dbReference type="EMBL" id="BA000035">
    <property type="protein sequence ID" value="BAC18892.1"/>
    <property type="molecule type" value="Genomic_DNA"/>
</dbReference>
<dbReference type="RefSeq" id="WP_011075748.1">
    <property type="nucleotide sequence ID" value="NC_004369.1"/>
</dbReference>
<dbReference type="SMR" id="Q8FNR2"/>
<dbReference type="STRING" id="196164.gene:10742510"/>
<dbReference type="KEGG" id="cef:CE2082"/>
<dbReference type="eggNOG" id="COG1290">
    <property type="taxonomic scope" value="Bacteria"/>
</dbReference>
<dbReference type="HOGENOM" id="CLU_031114_2_0_11"/>
<dbReference type="OrthoDB" id="9804503at2"/>
<dbReference type="Proteomes" id="UP000001409">
    <property type="component" value="Chromosome"/>
</dbReference>
<dbReference type="GO" id="GO:0005886">
    <property type="term" value="C:plasma membrane"/>
    <property type="evidence" value="ECO:0007669"/>
    <property type="project" value="UniProtKB-SubCell"/>
</dbReference>
<dbReference type="GO" id="GO:0046872">
    <property type="term" value="F:metal ion binding"/>
    <property type="evidence" value="ECO:0007669"/>
    <property type="project" value="UniProtKB-KW"/>
</dbReference>
<dbReference type="GO" id="GO:0008121">
    <property type="term" value="F:ubiquinol-cytochrome-c reductase activity"/>
    <property type="evidence" value="ECO:0007669"/>
    <property type="project" value="UniProtKB-EC"/>
</dbReference>
<dbReference type="GO" id="GO:0022904">
    <property type="term" value="P:respiratory electron transport chain"/>
    <property type="evidence" value="ECO:0007669"/>
    <property type="project" value="InterPro"/>
</dbReference>
<dbReference type="FunFam" id="1.20.810.10:FF:000007">
    <property type="entry name" value="Ubiquinol-cytochrome C reductase B subunit"/>
    <property type="match status" value="1"/>
</dbReference>
<dbReference type="Gene3D" id="1.20.810.10">
    <property type="entry name" value="Cytochrome Bc1 Complex, Chain C"/>
    <property type="match status" value="1"/>
</dbReference>
<dbReference type="InterPro" id="IPR005797">
    <property type="entry name" value="Cyt_b/b6_N"/>
</dbReference>
<dbReference type="InterPro" id="IPR027387">
    <property type="entry name" value="Cytb/b6-like_sf"/>
</dbReference>
<dbReference type="InterPro" id="IPR016174">
    <property type="entry name" value="Di-haem_cyt_TM"/>
</dbReference>
<dbReference type="PANTHER" id="PTHR19271">
    <property type="entry name" value="CYTOCHROME B"/>
    <property type="match status" value="1"/>
</dbReference>
<dbReference type="PANTHER" id="PTHR19271:SF16">
    <property type="entry name" value="CYTOCHROME B"/>
    <property type="match status" value="1"/>
</dbReference>
<dbReference type="Pfam" id="PF13631">
    <property type="entry name" value="Cytochrom_B_N_2"/>
    <property type="match status" value="1"/>
</dbReference>
<dbReference type="SUPFAM" id="SSF81342">
    <property type="entry name" value="Transmembrane di-heme cytochromes"/>
    <property type="match status" value="1"/>
</dbReference>
<dbReference type="PROSITE" id="PS51002">
    <property type="entry name" value="CYTB_NTER"/>
    <property type="match status" value="1"/>
</dbReference>
<evidence type="ECO:0000250" key="1">
    <source>
        <dbReference type="UniProtKB" id="P00163"/>
    </source>
</evidence>
<evidence type="ECO:0000250" key="2">
    <source>
        <dbReference type="UniProtKB" id="Q79VE9"/>
    </source>
</evidence>
<evidence type="ECO:0000255" key="3"/>
<evidence type="ECO:0000255" key="4">
    <source>
        <dbReference type="PROSITE-ProRule" id="PRU00968"/>
    </source>
</evidence>
<proteinExistence type="inferred from homology"/>
<protein>
    <recommendedName>
        <fullName>Cytochrome bc1 complex cytochrome b subunit</fullName>
        <ecNumber evidence="2">7.1.1.8</ecNumber>
    </recommendedName>
    <alternativeName>
        <fullName>Cytochrome bc1 reductase complex subunit QcrB</fullName>
    </alternativeName>
    <alternativeName>
        <fullName>Menaquinol--cytochrome c reductase cytochrome b subunit</fullName>
    </alternativeName>
</protein>
<reference key="1">
    <citation type="journal article" date="2003" name="Genome Res.">
        <title>Comparative complete genome sequence analysis of the amino acid replacements responsible for the thermostability of Corynebacterium efficiens.</title>
        <authorList>
            <person name="Nishio Y."/>
            <person name="Nakamura Y."/>
            <person name="Kawarabayasi Y."/>
            <person name="Usuda Y."/>
            <person name="Kimura E."/>
            <person name="Sugimoto S."/>
            <person name="Matsui K."/>
            <person name="Yamagishi A."/>
            <person name="Kikuchi H."/>
            <person name="Ikeo K."/>
            <person name="Gojobori T."/>
        </authorList>
    </citation>
    <scope>NUCLEOTIDE SEQUENCE [LARGE SCALE GENOMIC DNA]</scope>
    <source>
        <strain>DSM 44549 / YS-314 / AJ 12310 / JCM 11189 / NBRC 100395</strain>
    </source>
</reference>
<feature type="chain" id="PRO_0000061923" description="Cytochrome bc1 complex cytochrome b subunit">
    <location>
        <begin position="1"/>
        <end position="541"/>
    </location>
</feature>
<feature type="transmembrane region" description="Helical" evidence="4">
    <location>
        <begin position="36"/>
        <end position="56"/>
    </location>
</feature>
<feature type="transmembrane region" description="Helical" evidence="4">
    <location>
        <begin position="109"/>
        <end position="129"/>
    </location>
</feature>
<feature type="transmembrane region" description="Helical" evidence="4">
    <location>
        <begin position="137"/>
        <end position="157"/>
    </location>
</feature>
<feature type="transmembrane region" description="Helical" evidence="4">
    <location>
        <begin position="169"/>
        <end position="189"/>
    </location>
</feature>
<feature type="transmembrane region" description="Helical" evidence="4">
    <location>
        <begin position="207"/>
        <end position="227"/>
    </location>
</feature>
<feature type="transmembrane region" description="Helical" evidence="4">
    <location>
        <begin position="256"/>
        <end position="276"/>
    </location>
</feature>
<feature type="transmembrane region" description="Helical" evidence="4">
    <location>
        <begin position="325"/>
        <end position="345"/>
    </location>
</feature>
<feature type="transmembrane region" description="Helical" evidence="4">
    <location>
        <begin position="371"/>
        <end position="391"/>
    </location>
</feature>
<feature type="transmembrane region" description="Helical" evidence="4">
    <location>
        <begin position="408"/>
        <end position="428"/>
    </location>
</feature>
<feature type="binding site" description="axial binding residue" evidence="4">
    <location>
        <position position="105"/>
    </location>
    <ligand>
        <name>heme</name>
        <dbReference type="ChEBI" id="CHEBI:30413"/>
        <label>1</label>
    </ligand>
    <ligandPart>
        <name>Fe</name>
        <dbReference type="ChEBI" id="CHEBI:18248"/>
    </ligandPart>
</feature>
<feature type="binding site" description="axial binding residue" evidence="4">
    <location>
        <position position="119"/>
    </location>
    <ligand>
        <name>heme</name>
        <dbReference type="ChEBI" id="CHEBI:30413"/>
        <label>2</label>
    </ligand>
    <ligandPart>
        <name>Fe</name>
        <dbReference type="ChEBI" id="CHEBI:18248"/>
    </ligandPart>
</feature>
<feature type="binding site" description="axial binding residue" evidence="4">
    <location>
        <position position="206"/>
    </location>
    <ligand>
        <name>heme</name>
        <dbReference type="ChEBI" id="CHEBI:30413"/>
        <label>1</label>
    </ligand>
    <ligandPart>
        <name>Fe</name>
        <dbReference type="ChEBI" id="CHEBI:18248"/>
    </ligandPart>
</feature>
<feature type="binding site" description="axial binding residue" evidence="4">
    <location>
        <position position="221"/>
    </location>
    <ligand>
        <name>heme</name>
        <dbReference type="ChEBI" id="CHEBI:30413"/>
        <label>2</label>
    </ligand>
    <ligandPart>
        <name>Fe</name>
        <dbReference type="ChEBI" id="CHEBI:18248"/>
    </ligandPart>
</feature>
<organism>
    <name type="scientific">Corynebacterium efficiens (strain DSM 44549 / YS-314 / AJ 12310 / JCM 11189 / NBRC 100395)</name>
    <dbReference type="NCBI Taxonomy" id="196164"/>
    <lineage>
        <taxon>Bacteria</taxon>
        <taxon>Bacillati</taxon>
        <taxon>Actinomycetota</taxon>
        <taxon>Actinomycetes</taxon>
        <taxon>Mycobacteriales</taxon>
        <taxon>Corynebacteriaceae</taxon>
        <taxon>Corynebacterium</taxon>
    </lineage>
</organism>
<sequence length="541" mass="60048">MSNKLATVGNNLDSRYTMAGGIRRQINKVFPTHWSFLLGEIALYSFIILILTGVYLTLFFDPSITKVIYDGAYLPLNGVEMSRAYMTALDISFEVRGGLFVRQMHHWAALMFVVSMMVHMMRIFFTGAFRRPREANWVIGVVLLILGIAEGFMGYSLPDDLLSGVGLRIMSAIIVGLPIIGTWMHWMIFGGDFPSDIMLDRFYIAHVLIIPGIILGLIAAHLALVWYQKHTQFPGAGRTENNVIGIRIMPVFAVKSVAFGAITLGFLSLLAGVTTINAIWNLGPYNPSQVSAGSQPDIYMLWTDGAARVMPAWELYFGNYTVPAVFWVAIMLGILVVLLIAYPWIEKKLTGDDAHHNLLQRPRDVPVRTSLGVMALIFYILLTISGGNDIWAYQFDVSLNAMTWIGRIGLIVFPAIGYFVTYRLCIGLQRSDREVLEHGIETGVIKQMPNGAFIEVHQPLGPVDEHGHPIPLPYSGAKVPKQLNELGFAEVESRGGFFGPDPESVATKANEIAHANHLEEVATLAAIQEENRKRDQAEGRI</sequence>
<name>QCRB_COREF</name>